<reference key="1">
    <citation type="journal article" date="2008" name="BMC Genomics">
        <title>Acidithiobacillus ferrooxidans metabolism: from genome sequence to industrial applications.</title>
        <authorList>
            <person name="Valdes J."/>
            <person name="Pedroso I."/>
            <person name="Quatrini R."/>
            <person name="Dodson R.J."/>
            <person name="Tettelin H."/>
            <person name="Blake R. II"/>
            <person name="Eisen J.A."/>
            <person name="Holmes D.S."/>
        </authorList>
    </citation>
    <scope>NUCLEOTIDE SEQUENCE [LARGE SCALE GENOMIC DNA]</scope>
    <source>
        <strain>ATCC 23270 / DSM 14882 / CIP 104768 / NCIMB 8455</strain>
    </source>
</reference>
<proteinExistence type="inferred from homology"/>
<gene>
    <name evidence="1" type="primary">rsmA</name>
    <name evidence="1" type="synonym">ksgA</name>
    <name type="ordered locus">AFE_0167</name>
</gene>
<organism>
    <name type="scientific">Acidithiobacillus ferrooxidans (strain ATCC 23270 / DSM 14882 / CIP 104768 / NCIMB 8455)</name>
    <name type="common">Ferrobacillus ferrooxidans (strain ATCC 23270)</name>
    <dbReference type="NCBI Taxonomy" id="243159"/>
    <lineage>
        <taxon>Bacteria</taxon>
        <taxon>Pseudomonadati</taxon>
        <taxon>Pseudomonadota</taxon>
        <taxon>Acidithiobacillia</taxon>
        <taxon>Acidithiobacillales</taxon>
        <taxon>Acidithiobacillaceae</taxon>
        <taxon>Acidithiobacillus</taxon>
    </lineage>
</organism>
<keyword id="KW-0963">Cytoplasm</keyword>
<keyword id="KW-0489">Methyltransferase</keyword>
<keyword id="KW-1185">Reference proteome</keyword>
<keyword id="KW-0694">RNA-binding</keyword>
<keyword id="KW-0698">rRNA processing</keyword>
<keyword id="KW-0949">S-adenosyl-L-methionine</keyword>
<keyword id="KW-0808">Transferase</keyword>
<sequence>MQEGGLPRAKKRFGQNFLVQPQIVERIVAAIRPASGDHLVEIGPGPGALTKSLLRLLPQFTVVELDRDMIAGLRALAPPEQLRVLQADALEVDFAALAGAGNALRIVGNLPYNVATPLIFHILEHAEQVRDMHFMLQKEVVDRVVAMPGSKAYGRLSVMIQAYCAVESLFTVAPGNFFPVPKVDSAFMRLIPHRPGLLPPHLQAPFARIVATSFAQRRKTLANNLRGILSADDLRGLQIDPGSRAETLDQAAFFRLAEATVEQGNRS</sequence>
<feature type="chain" id="PRO_1000194374" description="Ribosomal RNA small subunit methyltransferase A">
    <location>
        <begin position="1"/>
        <end position="267"/>
    </location>
</feature>
<feature type="binding site" evidence="1">
    <location>
        <position position="16"/>
    </location>
    <ligand>
        <name>S-adenosyl-L-methionine</name>
        <dbReference type="ChEBI" id="CHEBI:59789"/>
    </ligand>
</feature>
<feature type="binding site" evidence="1">
    <location>
        <position position="18"/>
    </location>
    <ligand>
        <name>S-adenosyl-L-methionine</name>
        <dbReference type="ChEBI" id="CHEBI:59789"/>
    </ligand>
</feature>
<feature type="binding site" evidence="1">
    <location>
        <position position="43"/>
    </location>
    <ligand>
        <name>S-adenosyl-L-methionine</name>
        <dbReference type="ChEBI" id="CHEBI:59789"/>
    </ligand>
</feature>
<feature type="binding site" evidence="1">
    <location>
        <position position="64"/>
    </location>
    <ligand>
        <name>S-adenosyl-L-methionine</name>
        <dbReference type="ChEBI" id="CHEBI:59789"/>
    </ligand>
</feature>
<feature type="binding site" evidence="1">
    <location>
        <position position="88"/>
    </location>
    <ligand>
        <name>S-adenosyl-L-methionine</name>
        <dbReference type="ChEBI" id="CHEBI:59789"/>
    </ligand>
</feature>
<feature type="binding site" evidence="1">
    <location>
        <position position="109"/>
    </location>
    <ligand>
        <name>S-adenosyl-L-methionine</name>
        <dbReference type="ChEBI" id="CHEBI:59789"/>
    </ligand>
</feature>
<evidence type="ECO:0000255" key="1">
    <source>
        <dbReference type="HAMAP-Rule" id="MF_00607"/>
    </source>
</evidence>
<accession>B7J3R3</accession>
<name>RSMA_ACIF2</name>
<dbReference type="EC" id="2.1.1.182" evidence="1"/>
<dbReference type="EMBL" id="CP001219">
    <property type="protein sequence ID" value="ACK79465.1"/>
    <property type="molecule type" value="Genomic_DNA"/>
</dbReference>
<dbReference type="SMR" id="B7J3R3"/>
<dbReference type="STRING" id="243159.AFE_0167"/>
<dbReference type="PaxDb" id="243159-AFE_0167"/>
<dbReference type="KEGG" id="afr:AFE_0167"/>
<dbReference type="eggNOG" id="COG0030">
    <property type="taxonomic scope" value="Bacteria"/>
</dbReference>
<dbReference type="HOGENOM" id="CLU_041220_0_1_6"/>
<dbReference type="Proteomes" id="UP000001362">
    <property type="component" value="Chromosome"/>
</dbReference>
<dbReference type="GO" id="GO:0005829">
    <property type="term" value="C:cytosol"/>
    <property type="evidence" value="ECO:0007669"/>
    <property type="project" value="TreeGrafter"/>
</dbReference>
<dbReference type="GO" id="GO:0052908">
    <property type="term" value="F:16S rRNA (adenine(1518)-N(6)/adenine(1519)-N(6))-dimethyltransferase activity"/>
    <property type="evidence" value="ECO:0007669"/>
    <property type="project" value="UniProtKB-EC"/>
</dbReference>
<dbReference type="GO" id="GO:0003723">
    <property type="term" value="F:RNA binding"/>
    <property type="evidence" value="ECO:0007669"/>
    <property type="project" value="UniProtKB-KW"/>
</dbReference>
<dbReference type="Gene3D" id="1.10.8.100">
    <property type="entry name" value="Ribosomal RNA adenine dimethylase-like, domain 2"/>
    <property type="match status" value="1"/>
</dbReference>
<dbReference type="Gene3D" id="3.40.50.150">
    <property type="entry name" value="Vaccinia Virus protein VP39"/>
    <property type="match status" value="1"/>
</dbReference>
<dbReference type="HAMAP" id="MF_00607">
    <property type="entry name" value="16SrRNA_methyltr_A"/>
    <property type="match status" value="1"/>
</dbReference>
<dbReference type="InterPro" id="IPR001737">
    <property type="entry name" value="KsgA/Erm"/>
</dbReference>
<dbReference type="InterPro" id="IPR023165">
    <property type="entry name" value="rRNA_Ade_diMease-like_C"/>
</dbReference>
<dbReference type="InterPro" id="IPR020596">
    <property type="entry name" value="rRNA_Ade_Mease_Trfase_CS"/>
</dbReference>
<dbReference type="InterPro" id="IPR020598">
    <property type="entry name" value="rRNA_Ade_methylase_Trfase_N"/>
</dbReference>
<dbReference type="InterPro" id="IPR011530">
    <property type="entry name" value="rRNA_adenine_dimethylase"/>
</dbReference>
<dbReference type="InterPro" id="IPR029063">
    <property type="entry name" value="SAM-dependent_MTases_sf"/>
</dbReference>
<dbReference type="NCBIfam" id="TIGR00755">
    <property type="entry name" value="ksgA"/>
    <property type="match status" value="1"/>
</dbReference>
<dbReference type="PANTHER" id="PTHR11727">
    <property type="entry name" value="DIMETHYLADENOSINE TRANSFERASE"/>
    <property type="match status" value="1"/>
</dbReference>
<dbReference type="PANTHER" id="PTHR11727:SF7">
    <property type="entry name" value="DIMETHYLADENOSINE TRANSFERASE-RELATED"/>
    <property type="match status" value="1"/>
</dbReference>
<dbReference type="Pfam" id="PF00398">
    <property type="entry name" value="RrnaAD"/>
    <property type="match status" value="1"/>
</dbReference>
<dbReference type="SMART" id="SM00650">
    <property type="entry name" value="rADc"/>
    <property type="match status" value="1"/>
</dbReference>
<dbReference type="SUPFAM" id="SSF53335">
    <property type="entry name" value="S-adenosyl-L-methionine-dependent methyltransferases"/>
    <property type="match status" value="1"/>
</dbReference>
<dbReference type="PROSITE" id="PS01131">
    <property type="entry name" value="RRNA_A_DIMETH"/>
    <property type="match status" value="1"/>
</dbReference>
<dbReference type="PROSITE" id="PS51689">
    <property type="entry name" value="SAM_RNA_A_N6_MT"/>
    <property type="match status" value="1"/>
</dbReference>
<comment type="function">
    <text evidence="1">Specifically dimethylates two adjacent adenosines (A1518 and A1519) in the loop of a conserved hairpin near the 3'-end of 16S rRNA in the 30S particle. May play a critical role in biogenesis of 30S subunits.</text>
</comment>
<comment type="catalytic activity">
    <reaction evidence="1">
        <text>adenosine(1518)/adenosine(1519) in 16S rRNA + 4 S-adenosyl-L-methionine = N(6)-dimethyladenosine(1518)/N(6)-dimethyladenosine(1519) in 16S rRNA + 4 S-adenosyl-L-homocysteine + 4 H(+)</text>
        <dbReference type="Rhea" id="RHEA:19609"/>
        <dbReference type="Rhea" id="RHEA-COMP:10232"/>
        <dbReference type="Rhea" id="RHEA-COMP:10233"/>
        <dbReference type="ChEBI" id="CHEBI:15378"/>
        <dbReference type="ChEBI" id="CHEBI:57856"/>
        <dbReference type="ChEBI" id="CHEBI:59789"/>
        <dbReference type="ChEBI" id="CHEBI:74411"/>
        <dbReference type="ChEBI" id="CHEBI:74493"/>
        <dbReference type="EC" id="2.1.1.182"/>
    </reaction>
</comment>
<comment type="subcellular location">
    <subcellularLocation>
        <location evidence="1">Cytoplasm</location>
    </subcellularLocation>
</comment>
<comment type="similarity">
    <text evidence="1">Belongs to the class I-like SAM-binding methyltransferase superfamily. rRNA adenine N(6)-methyltransferase family. RsmA subfamily.</text>
</comment>
<protein>
    <recommendedName>
        <fullName evidence="1">Ribosomal RNA small subunit methyltransferase A</fullName>
        <ecNumber evidence="1">2.1.1.182</ecNumber>
    </recommendedName>
    <alternativeName>
        <fullName evidence="1">16S rRNA (adenine(1518)-N(6)/adenine(1519)-N(6))-dimethyltransferase</fullName>
    </alternativeName>
    <alternativeName>
        <fullName evidence="1">16S rRNA dimethyladenosine transferase</fullName>
    </alternativeName>
    <alternativeName>
        <fullName evidence="1">16S rRNA dimethylase</fullName>
    </alternativeName>
    <alternativeName>
        <fullName evidence="1">S-adenosylmethionine-6-N', N'-adenosyl(rRNA) dimethyltransferase</fullName>
    </alternativeName>
</protein>